<name>RS7_CLOPS</name>
<comment type="function">
    <text evidence="1">One of the primary rRNA binding proteins, it binds directly to 16S rRNA where it nucleates assembly of the head domain of the 30S subunit. Is located at the subunit interface close to the decoding center, probably blocks exit of the E-site tRNA.</text>
</comment>
<comment type="subunit">
    <text evidence="1">Part of the 30S ribosomal subunit. Contacts proteins S9 and S11.</text>
</comment>
<comment type="similarity">
    <text evidence="1">Belongs to the universal ribosomal protein uS7 family.</text>
</comment>
<protein>
    <recommendedName>
        <fullName evidence="1">Small ribosomal subunit protein uS7</fullName>
    </recommendedName>
    <alternativeName>
        <fullName evidence="2">30S ribosomal protein S7</fullName>
    </alternativeName>
</protein>
<accession>Q0SQE0</accession>
<organism>
    <name type="scientific">Clostridium perfringens (strain SM101 / Type A)</name>
    <dbReference type="NCBI Taxonomy" id="289380"/>
    <lineage>
        <taxon>Bacteria</taxon>
        <taxon>Bacillati</taxon>
        <taxon>Bacillota</taxon>
        <taxon>Clostridia</taxon>
        <taxon>Eubacteriales</taxon>
        <taxon>Clostridiaceae</taxon>
        <taxon>Clostridium</taxon>
    </lineage>
</organism>
<feature type="chain" id="PRO_1000014181" description="Small ribosomal subunit protein uS7">
    <location>
        <begin position="1"/>
        <end position="156"/>
    </location>
</feature>
<sequence length="156" mass="17832">MPRKGHIAKRDVLPDPVYNSKVVTKLINNVMEDGKKGVAQKICYDAFQIINEKTGRDAMEVFEEAMNNIMPLLEVKARRIGGANYQVPIEVRPERRQTLGLRWLLAASRKRGEKYMRERLAGELMDAANNTGAAVKKREDTHKMAEANKAFAHYRY</sequence>
<proteinExistence type="inferred from homology"/>
<dbReference type="EMBL" id="CP000312">
    <property type="protein sequence ID" value="ABG87561.1"/>
    <property type="molecule type" value="Genomic_DNA"/>
</dbReference>
<dbReference type="RefSeq" id="WP_003452182.1">
    <property type="nucleotide sequence ID" value="NZ_CAXVKH010000004.1"/>
</dbReference>
<dbReference type="SMR" id="Q0SQE0"/>
<dbReference type="GeneID" id="93001005"/>
<dbReference type="KEGG" id="cpr:CPR_2404"/>
<dbReference type="Proteomes" id="UP000001824">
    <property type="component" value="Chromosome"/>
</dbReference>
<dbReference type="GO" id="GO:0015935">
    <property type="term" value="C:small ribosomal subunit"/>
    <property type="evidence" value="ECO:0007669"/>
    <property type="project" value="InterPro"/>
</dbReference>
<dbReference type="GO" id="GO:0019843">
    <property type="term" value="F:rRNA binding"/>
    <property type="evidence" value="ECO:0007669"/>
    <property type="project" value="UniProtKB-UniRule"/>
</dbReference>
<dbReference type="GO" id="GO:0003735">
    <property type="term" value="F:structural constituent of ribosome"/>
    <property type="evidence" value="ECO:0007669"/>
    <property type="project" value="InterPro"/>
</dbReference>
<dbReference type="GO" id="GO:0000049">
    <property type="term" value="F:tRNA binding"/>
    <property type="evidence" value="ECO:0007669"/>
    <property type="project" value="UniProtKB-UniRule"/>
</dbReference>
<dbReference type="GO" id="GO:0006412">
    <property type="term" value="P:translation"/>
    <property type="evidence" value="ECO:0007669"/>
    <property type="project" value="UniProtKB-UniRule"/>
</dbReference>
<dbReference type="CDD" id="cd14869">
    <property type="entry name" value="uS7_Bacteria"/>
    <property type="match status" value="1"/>
</dbReference>
<dbReference type="FunFam" id="1.10.455.10:FF:000001">
    <property type="entry name" value="30S ribosomal protein S7"/>
    <property type="match status" value="1"/>
</dbReference>
<dbReference type="Gene3D" id="1.10.455.10">
    <property type="entry name" value="Ribosomal protein S7 domain"/>
    <property type="match status" value="1"/>
</dbReference>
<dbReference type="HAMAP" id="MF_00480_B">
    <property type="entry name" value="Ribosomal_uS7_B"/>
    <property type="match status" value="1"/>
</dbReference>
<dbReference type="InterPro" id="IPR000235">
    <property type="entry name" value="Ribosomal_uS7"/>
</dbReference>
<dbReference type="InterPro" id="IPR005717">
    <property type="entry name" value="Ribosomal_uS7_bac/org-type"/>
</dbReference>
<dbReference type="InterPro" id="IPR020606">
    <property type="entry name" value="Ribosomal_uS7_CS"/>
</dbReference>
<dbReference type="InterPro" id="IPR023798">
    <property type="entry name" value="Ribosomal_uS7_dom"/>
</dbReference>
<dbReference type="InterPro" id="IPR036823">
    <property type="entry name" value="Ribosomal_uS7_dom_sf"/>
</dbReference>
<dbReference type="NCBIfam" id="TIGR01029">
    <property type="entry name" value="rpsG_bact"/>
    <property type="match status" value="1"/>
</dbReference>
<dbReference type="PANTHER" id="PTHR11205">
    <property type="entry name" value="RIBOSOMAL PROTEIN S7"/>
    <property type="match status" value="1"/>
</dbReference>
<dbReference type="Pfam" id="PF00177">
    <property type="entry name" value="Ribosomal_S7"/>
    <property type="match status" value="1"/>
</dbReference>
<dbReference type="PIRSF" id="PIRSF002122">
    <property type="entry name" value="RPS7p_RPS7a_RPS5e_RPS7o"/>
    <property type="match status" value="1"/>
</dbReference>
<dbReference type="SUPFAM" id="SSF47973">
    <property type="entry name" value="Ribosomal protein S7"/>
    <property type="match status" value="1"/>
</dbReference>
<dbReference type="PROSITE" id="PS00052">
    <property type="entry name" value="RIBOSOMAL_S7"/>
    <property type="match status" value="1"/>
</dbReference>
<evidence type="ECO:0000255" key="1">
    <source>
        <dbReference type="HAMAP-Rule" id="MF_00480"/>
    </source>
</evidence>
<evidence type="ECO:0000305" key="2"/>
<gene>
    <name evidence="1" type="primary">rpsG</name>
    <name type="ordered locus">CPR_2404</name>
</gene>
<keyword id="KW-0687">Ribonucleoprotein</keyword>
<keyword id="KW-0689">Ribosomal protein</keyword>
<keyword id="KW-0694">RNA-binding</keyword>
<keyword id="KW-0699">rRNA-binding</keyword>
<keyword id="KW-0820">tRNA-binding</keyword>
<reference key="1">
    <citation type="journal article" date="2006" name="Genome Res.">
        <title>Skewed genomic variability in strains of the toxigenic bacterial pathogen, Clostridium perfringens.</title>
        <authorList>
            <person name="Myers G.S.A."/>
            <person name="Rasko D.A."/>
            <person name="Cheung J.K."/>
            <person name="Ravel J."/>
            <person name="Seshadri R."/>
            <person name="DeBoy R.T."/>
            <person name="Ren Q."/>
            <person name="Varga J."/>
            <person name="Awad M.M."/>
            <person name="Brinkac L.M."/>
            <person name="Daugherty S.C."/>
            <person name="Haft D.H."/>
            <person name="Dodson R.J."/>
            <person name="Madupu R."/>
            <person name="Nelson W.C."/>
            <person name="Rosovitz M.J."/>
            <person name="Sullivan S.A."/>
            <person name="Khouri H."/>
            <person name="Dimitrov G.I."/>
            <person name="Watkins K.L."/>
            <person name="Mulligan S."/>
            <person name="Benton J."/>
            <person name="Radune D."/>
            <person name="Fisher D.J."/>
            <person name="Atkins H.S."/>
            <person name="Hiscox T."/>
            <person name="Jost B.H."/>
            <person name="Billington S.J."/>
            <person name="Songer J.G."/>
            <person name="McClane B.A."/>
            <person name="Titball R.W."/>
            <person name="Rood J.I."/>
            <person name="Melville S.B."/>
            <person name="Paulsen I.T."/>
        </authorList>
    </citation>
    <scope>NUCLEOTIDE SEQUENCE [LARGE SCALE GENOMIC DNA]</scope>
    <source>
        <strain>SM101 / Type A</strain>
    </source>
</reference>